<reference key="1">
    <citation type="journal article" date="2003" name="Nature">
        <title>Genome divergence in two Prochlorococcus ecotypes reflects oceanic niche differentiation.</title>
        <authorList>
            <person name="Rocap G."/>
            <person name="Larimer F.W."/>
            <person name="Lamerdin J.E."/>
            <person name="Malfatti S."/>
            <person name="Chain P."/>
            <person name="Ahlgren N.A."/>
            <person name="Arellano A."/>
            <person name="Coleman M."/>
            <person name="Hauser L."/>
            <person name="Hess W.R."/>
            <person name="Johnson Z.I."/>
            <person name="Land M.L."/>
            <person name="Lindell D."/>
            <person name="Post A.F."/>
            <person name="Regala W."/>
            <person name="Shah M."/>
            <person name="Shaw S.L."/>
            <person name="Steglich C."/>
            <person name="Sullivan M.B."/>
            <person name="Ting C.S."/>
            <person name="Tolonen A."/>
            <person name="Webb E.A."/>
            <person name="Zinser E.R."/>
            <person name="Chisholm S.W."/>
        </authorList>
    </citation>
    <scope>NUCLEOTIDE SEQUENCE [LARGE SCALE GENOMIC DNA]</scope>
    <source>
        <strain>MIT 9313</strain>
    </source>
</reference>
<accession>Q7V4E4</accession>
<evidence type="ECO:0000255" key="1">
    <source>
        <dbReference type="HAMAP-Rule" id="MF_00491"/>
    </source>
</evidence>
<comment type="function">
    <text evidence="1">NDH-1 shuttles electrons from NAD(P)H, via FMN and iron-sulfur (Fe-S) centers, to quinones in the respiratory chain. The immediate electron acceptor for the enzyme in this species is believed to be plastoquinone. Couples the redox reaction to proton translocation (for every two electrons transferred, four hydrogen ions are translocated across the cytoplasmic membrane), and thus conserves the redox energy in a proton gradient.</text>
</comment>
<comment type="catalytic activity">
    <reaction evidence="1">
        <text>a plastoquinone + NADH + (n+1) H(+)(in) = a plastoquinol + NAD(+) + n H(+)(out)</text>
        <dbReference type="Rhea" id="RHEA:42608"/>
        <dbReference type="Rhea" id="RHEA-COMP:9561"/>
        <dbReference type="Rhea" id="RHEA-COMP:9562"/>
        <dbReference type="ChEBI" id="CHEBI:15378"/>
        <dbReference type="ChEBI" id="CHEBI:17757"/>
        <dbReference type="ChEBI" id="CHEBI:57540"/>
        <dbReference type="ChEBI" id="CHEBI:57945"/>
        <dbReference type="ChEBI" id="CHEBI:62192"/>
    </reaction>
</comment>
<comment type="catalytic activity">
    <reaction evidence="1">
        <text>a plastoquinone + NADPH + (n+1) H(+)(in) = a plastoquinol + NADP(+) + n H(+)(out)</text>
        <dbReference type="Rhea" id="RHEA:42612"/>
        <dbReference type="Rhea" id="RHEA-COMP:9561"/>
        <dbReference type="Rhea" id="RHEA-COMP:9562"/>
        <dbReference type="ChEBI" id="CHEBI:15378"/>
        <dbReference type="ChEBI" id="CHEBI:17757"/>
        <dbReference type="ChEBI" id="CHEBI:57783"/>
        <dbReference type="ChEBI" id="CHEBI:58349"/>
        <dbReference type="ChEBI" id="CHEBI:62192"/>
    </reaction>
</comment>
<comment type="subcellular location">
    <subcellularLocation>
        <location evidence="1">Cellular thylakoid membrane</location>
        <topology evidence="1">Multi-pass membrane protein</topology>
    </subcellularLocation>
</comment>
<comment type="similarity">
    <text evidence="1">Belongs to the complex I subunit 4 family.</text>
</comment>
<proteinExistence type="inferred from homology"/>
<gene>
    <name evidence="1" type="primary">ndhD</name>
    <name type="ordered locus">PMT_2010</name>
</gene>
<name>NU4C_PROMM</name>
<sequence length="563" mass="61320">MLEFAISAPLDTGAELLSDQVSANFPWLSLSILFPIVGAFLVPFIPDEGEGKQVRWFALGIALVTFLITVAAYLYGYDPSLSGLQLSERVSWLPDLGLTWAVGADGISMPLILLTSFITALAVLAAWPVTFKPKLFFFLILAMDGGQIAVFAVQDMLLFFLAWELELLPVYLLLAIWGGKKRQYAATKFIIYTAGSSLFILLVALAMGFFGGGTPNFEYTNLAQQSFGTGFQLLCYAGLLIAFGVKLPIVPLHTWLPDAHGEATAPVHMLLAGILLKMGGYALMRFNAQLLPEAHAQFAPLLIVLGVVNIIYAALTSFAQRNLKRKIAYSSISHMGFVLIGIGSFSALGTSGAMLQMISHGLIGASLFFLVGATYDRTHTLQLEEMGGVGQKMRIMFALWTVCALASLALPGMSGFVSELMVFVGFATDEAYTLTFRIVIAGLAAIGVILTPIYLLSMLREIFFGKENDQLVSHTNLVDAEPREVYIISCLLVPIIGIGLYPRLMTDSYTASIQELVKRDDLALQRIKKPSALMIRNTTMTPAVVSSPRLPITQTRSEQLTRK</sequence>
<organism>
    <name type="scientific">Prochlorococcus marinus (strain MIT 9313)</name>
    <dbReference type="NCBI Taxonomy" id="74547"/>
    <lineage>
        <taxon>Bacteria</taxon>
        <taxon>Bacillati</taxon>
        <taxon>Cyanobacteriota</taxon>
        <taxon>Cyanophyceae</taxon>
        <taxon>Synechococcales</taxon>
        <taxon>Prochlorococcaceae</taxon>
        <taxon>Prochlorococcus</taxon>
    </lineage>
</organism>
<feature type="chain" id="PRO_0000343240" description="NAD(P)H-quinone oxidoreductase chain 4">
    <location>
        <begin position="1"/>
        <end position="563"/>
    </location>
</feature>
<feature type="transmembrane region" description="Helical" evidence="1">
    <location>
        <begin position="25"/>
        <end position="45"/>
    </location>
</feature>
<feature type="transmembrane region" description="Helical" evidence="1">
    <location>
        <begin position="56"/>
        <end position="76"/>
    </location>
</feature>
<feature type="transmembrane region" description="Helical" evidence="1">
    <location>
        <begin position="90"/>
        <end position="110"/>
    </location>
</feature>
<feature type="transmembrane region" description="Helical" evidence="1">
    <location>
        <begin position="111"/>
        <end position="131"/>
    </location>
</feature>
<feature type="transmembrane region" description="Helical" evidence="1">
    <location>
        <begin position="133"/>
        <end position="153"/>
    </location>
</feature>
<feature type="transmembrane region" description="Helical" evidence="1">
    <location>
        <begin position="157"/>
        <end position="177"/>
    </location>
</feature>
<feature type="transmembrane region" description="Helical" evidence="1">
    <location>
        <begin position="189"/>
        <end position="209"/>
    </location>
</feature>
<feature type="transmembrane region" description="Helical" evidence="1">
    <location>
        <begin position="230"/>
        <end position="250"/>
    </location>
</feature>
<feature type="transmembrane region" description="Helical" evidence="1">
    <location>
        <begin position="264"/>
        <end position="284"/>
    </location>
</feature>
<feature type="transmembrane region" description="Helical" evidence="1">
    <location>
        <begin position="298"/>
        <end position="318"/>
    </location>
</feature>
<feature type="transmembrane region" description="Helical" evidence="1">
    <location>
        <begin position="335"/>
        <end position="355"/>
    </location>
</feature>
<feature type="transmembrane region" description="Helical" evidence="1">
    <location>
        <begin position="356"/>
        <end position="376"/>
    </location>
</feature>
<feature type="transmembrane region" description="Helical" evidence="1">
    <location>
        <begin position="397"/>
        <end position="417"/>
    </location>
</feature>
<feature type="transmembrane region" description="Helical" evidence="1">
    <location>
        <begin position="438"/>
        <end position="458"/>
    </location>
</feature>
<feature type="transmembrane region" description="Helical" evidence="1">
    <location>
        <begin position="485"/>
        <end position="505"/>
    </location>
</feature>
<protein>
    <recommendedName>
        <fullName evidence="1">NAD(P)H-quinone oxidoreductase chain 4</fullName>
        <ecNumber evidence="1">7.1.1.-</ecNumber>
    </recommendedName>
    <alternativeName>
        <fullName evidence="1">NAD(P)H dehydrogenase I, chain 4</fullName>
    </alternativeName>
    <alternativeName>
        <fullName evidence="1">NDH-1, chain 4</fullName>
    </alternativeName>
</protein>
<dbReference type="EC" id="7.1.1.-" evidence="1"/>
<dbReference type="EMBL" id="BX548175">
    <property type="protein sequence ID" value="CAE22184.1"/>
    <property type="molecule type" value="Genomic_DNA"/>
</dbReference>
<dbReference type="RefSeq" id="WP_011131375.1">
    <property type="nucleotide sequence ID" value="NC_005071.1"/>
</dbReference>
<dbReference type="SMR" id="Q7V4E4"/>
<dbReference type="KEGG" id="pmt:PMT_2010"/>
<dbReference type="eggNOG" id="COG1008">
    <property type="taxonomic scope" value="Bacteria"/>
</dbReference>
<dbReference type="HOGENOM" id="CLU_007100_4_0_3"/>
<dbReference type="OrthoDB" id="9811718at2"/>
<dbReference type="Proteomes" id="UP000001423">
    <property type="component" value="Chromosome"/>
</dbReference>
<dbReference type="GO" id="GO:0031676">
    <property type="term" value="C:plasma membrane-derived thylakoid membrane"/>
    <property type="evidence" value="ECO:0007669"/>
    <property type="project" value="UniProtKB-SubCell"/>
</dbReference>
<dbReference type="GO" id="GO:0008137">
    <property type="term" value="F:NADH dehydrogenase (ubiquinone) activity"/>
    <property type="evidence" value="ECO:0007669"/>
    <property type="project" value="InterPro"/>
</dbReference>
<dbReference type="GO" id="GO:0048039">
    <property type="term" value="F:ubiquinone binding"/>
    <property type="evidence" value="ECO:0007669"/>
    <property type="project" value="TreeGrafter"/>
</dbReference>
<dbReference type="GO" id="GO:0042773">
    <property type="term" value="P:ATP synthesis coupled electron transport"/>
    <property type="evidence" value="ECO:0007669"/>
    <property type="project" value="InterPro"/>
</dbReference>
<dbReference type="GO" id="GO:0015990">
    <property type="term" value="P:electron transport coupled proton transport"/>
    <property type="evidence" value="ECO:0007669"/>
    <property type="project" value="TreeGrafter"/>
</dbReference>
<dbReference type="HAMAP" id="MF_00491">
    <property type="entry name" value="NDH1_NuoM"/>
    <property type="match status" value="1"/>
</dbReference>
<dbReference type="InterPro" id="IPR022997">
    <property type="entry name" value="NADH_Q_OxRdtase_chain4"/>
</dbReference>
<dbReference type="InterPro" id="IPR010227">
    <property type="entry name" value="NADH_Q_OxRdtase_chainM/4"/>
</dbReference>
<dbReference type="InterPro" id="IPR003918">
    <property type="entry name" value="NADH_UbQ_OxRdtase"/>
</dbReference>
<dbReference type="InterPro" id="IPR001750">
    <property type="entry name" value="ND/Mrp_TM"/>
</dbReference>
<dbReference type="NCBIfam" id="TIGR01972">
    <property type="entry name" value="NDH_I_M"/>
    <property type="match status" value="1"/>
</dbReference>
<dbReference type="NCBIfam" id="NF002713">
    <property type="entry name" value="PRK02546.1"/>
    <property type="match status" value="1"/>
</dbReference>
<dbReference type="NCBIfam" id="NF009212">
    <property type="entry name" value="PRK12561.1"/>
    <property type="match status" value="1"/>
</dbReference>
<dbReference type="PANTHER" id="PTHR43507:SF21">
    <property type="entry name" value="NAD(P)H-QUINONE OXIDOREDUCTASE CHAIN 4, CHLOROPLASTIC"/>
    <property type="match status" value="1"/>
</dbReference>
<dbReference type="PANTHER" id="PTHR43507">
    <property type="entry name" value="NADH-UBIQUINONE OXIDOREDUCTASE CHAIN 4"/>
    <property type="match status" value="1"/>
</dbReference>
<dbReference type="Pfam" id="PF00361">
    <property type="entry name" value="Proton_antipo_M"/>
    <property type="match status" value="1"/>
</dbReference>
<dbReference type="PRINTS" id="PR01437">
    <property type="entry name" value="NUOXDRDTASE4"/>
</dbReference>
<keyword id="KW-0472">Membrane</keyword>
<keyword id="KW-0520">NAD</keyword>
<keyword id="KW-0521">NADP</keyword>
<keyword id="KW-0618">Plastoquinone</keyword>
<keyword id="KW-0874">Quinone</keyword>
<keyword id="KW-1185">Reference proteome</keyword>
<keyword id="KW-0793">Thylakoid</keyword>
<keyword id="KW-1278">Translocase</keyword>
<keyword id="KW-0812">Transmembrane</keyword>
<keyword id="KW-1133">Transmembrane helix</keyword>